<feature type="chain" id="PRO_0000237281" description="Large ribosomal subunit protein uL2cz/uL2cy">
    <location>
        <begin position="1"/>
        <end position="274"/>
    </location>
</feature>
<feature type="region of interest" description="Disordered" evidence="3">
    <location>
        <begin position="1"/>
        <end position="24"/>
    </location>
</feature>
<feature type="region of interest" description="Disordered" evidence="3">
    <location>
        <begin position="223"/>
        <end position="274"/>
    </location>
</feature>
<feature type="compositionally biased region" description="Polar residues" evidence="3">
    <location>
        <begin position="7"/>
        <end position="24"/>
    </location>
</feature>
<accession>Q33BZ0</accession>
<name>RK2_NICTO</name>
<organism>
    <name type="scientific">Nicotiana tomentosiformis</name>
    <name type="common">Tobacco</name>
    <dbReference type="NCBI Taxonomy" id="4098"/>
    <lineage>
        <taxon>Eukaryota</taxon>
        <taxon>Viridiplantae</taxon>
        <taxon>Streptophyta</taxon>
        <taxon>Embryophyta</taxon>
        <taxon>Tracheophyta</taxon>
        <taxon>Spermatophyta</taxon>
        <taxon>Magnoliopsida</taxon>
        <taxon>eudicotyledons</taxon>
        <taxon>Gunneridae</taxon>
        <taxon>Pentapetalae</taxon>
        <taxon>asterids</taxon>
        <taxon>lamiids</taxon>
        <taxon>Solanales</taxon>
        <taxon>Solanaceae</taxon>
        <taxon>Nicotianoideae</taxon>
        <taxon>Nicotianeae</taxon>
        <taxon>Nicotiana</taxon>
    </lineage>
</organism>
<comment type="subunit">
    <text evidence="1">Part of the 50S ribosomal subunit.</text>
</comment>
<comment type="subcellular location">
    <subcellularLocation>
        <location>Plastid</location>
        <location>Chloroplast</location>
    </subcellularLocation>
</comment>
<comment type="similarity">
    <text evidence="4">Belongs to the universal ribosomal protein uL2 family.</text>
</comment>
<sequence length="274" mass="30011">MAIHLYKTSTPSTRNGTVDSQVKSNPRNNLIYGQHHCGKGRNARGIITARHRGGGHKRLYRKIDFRRNEKDIYGRIVTIEYDPNRNAYICLIHYGDGEKRYILHPRGAIIGDTIVSGTEVPIKMGNALPLTDMPLGTAIHNIEITLGKGGQLARAAGAVAKLIAKEGKSATLKLPSGEVRLISKNCSATVGQVGNVGVNQKSLGRAGSKRWLGKRPVVRGVVMNPVDHPHGGGEGRAPIGRKKPTTPWGYPALGRRSRKRNKYSDNLILRRRSK</sequence>
<proteinExistence type="inferred from homology"/>
<dbReference type="EMBL" id="AB240139">
    <property type="protein sequence ID" value="BAE48045.1"/>
    <property type="molecule type" value="Genomic_DNA"/>
</dbReference>
<dbReference type="EMBL" id="AB240139">
    <property type="protein sequence ID" value="BAE48084.1"/>
    <property type="molecule type" value="Genomic_DNA"/>
</dbReference>
<dbReference type="SMR" id="Q33BZ0"/>
<dbReference type="KEGG" id="nto:3776291"/>
<dbReference type="KEGG" id="nto:3776292"/>
<dbReference type="OrthoDB" id="1868197at2759"/>
<dbReference type="GO" id="GO:0009507">
    <property type="term" value="C:chloroplast"/>
    <property type="evidence" value="ECO:0007669"/>
    <property type="project" value="UniProtKB-SubCell"/>
</dbReference>
<dbReference type="GO" id="GO:0005762">
    <property type="term" value="C:mitochondrial large ribosomal subunit"/>
    <property type="evidence" value="ECO:0007669"/>
    <property type="project" value="TreeGrafter"/>
</dbReference>
<dbReference type="GO" id="GO:0019843">
    <property type="term" value="F:rRNA binding"/>
    <property type="evidence" value="ECO:0007669"/>
    <property type="project" value="UniProtKB-UniRule"/>
</dbReference>
<dbReference type="GO" id="GO:0003735">
    <property type="term" value="F:structural constituent of ribosome"/>
    <property type="evidence" value="ECO:0007669"/>
    <property type="project" value="InterPro"/>
</dbReference>
<dbReference type="GO" id="GO:0016740">
    <property type="term" value="F:transferase activity"/>
    <property type="evidence" value="ECO:0007669"/>
    <property type="project" value="InterPro"/>
</dbReference>
<dbReference type="GO" id="GO:0032543">
    <property type="term" value="P:mitochondrial translation"/>
    <property type="evidence" value="ECO:0007669"/>
    <property type="project" value="TreeGrafter"/>
</dbReference>
<dbReference type="FunFam" id="4.10.950.10:FF:000001">
    <property type="entry name" value="50S ribosomal protein L2"/>
    <property type="match status" value="1"/>
</dbReference>
<dbReference type="FunFam" id="2.30.30.30:FF:000008">
    <property type="entry name" value="50S ribosomal protein L2, chloroplastic"/>
    <property type="match status" value="1"/>
</dbReference>
<dbReference type="FunFam" id="2.40.50.140:FF:000029">
    <property type="entry name" value="50S ribosomal protein L2, chloroplastic"/>
    <property type="match status" value="1"/>
</dbReference>
<dbReference type="Gene3D" id="2.30.30.30">
    <property type="match status" value="1"/>
</dbReference>
<dbReference type="Gene3D" id="2.40.50.140">
    <property type="entry name" value="Nucleic acid-binding proteins"/>
    <property type="match status" value="1"/>
</dbReference>
<dbReference type="Gene3D" id="4.10.950.10">
    <property type="entry name" value="Ribosomal protein L2, domain 3"/>
    <property type="match status" value="1"/>
</dbReference>
<dbReference type="HAMAP" id="MF_01320_B">
    <property type="entry name" value="Ribosomal_uL2_B"/>
    <property type="match status" value="1"/>
</dbReference>
<dbReference type="InterPro" id="IPR012340">
    <property type="entry name" value="NA-bd_OB-fold"/>
</dbReference>
<dbReference type="InterPro" id="IPR014722">
    <property type="entry name" value="Rib_uL2_dom2"/>
</dbReference>
<dbReference type="InterPro" id="IPR002171">
    <property type="entry name" value="Ribosomal_uL2"/>
</dbReference>
<dbReference type="InterPro" id="IPR005880">
    <property type="entry name" value="Ribosomal_uL2_bac/org-type"/>
</dbReference>
<dbReference type="InterPro" id="IPR022669">
    <property type="entry name" value="Ribosomal_uL2_C"/>
</dbReference>
<dbReference type="InterPro" id="IPR022671">
    <property type="entry name" value="Ribosomal_uL2_CS"/>
</dbReference>
<dbReference type="InterPro" id="IPR014726">
    <property type="entry name" value="Ribosomal_uL2_dom3"/>
</dbReference>
<dbReference type="InterPro" id="IPR022666">
    <property type="entry name" value="Ribosomal_uL2_RNA-bd_dom"/>
</dbReference>
<dbReference type="InterPro" id="IPR008991">
    <property type="entry name" value="Translation_prot_SH3-like_sf"/>
</dbReference>
<dbReference type="NCBIfam" id="TIGR01171">
    <property type="entry name" value="rplB_bact"/>
    <property type="match status" value="1"/>
</dbReference>
<dbReference type="PANTHER" id="PTHR13691:SF5">
    <property type="entry name" value="LARGE RIBOSOMAL SUBUNIT PROTEIN UL2M"/>
    <property type="match status" value="1"/>
</dbReference>
<dbReference type="PANTHER" id="PTHR13691">
    <property type="entry name" value="RIBOSOMAL PROTEIN L2"/>
    <property type="match status" value="1"/>
</dbReference>
<dbReference type="Pfam" id="PF00181">
    <property type="entry name" value="Ribosomal_L2"/>
    <property type="match status" value="1"/>
</dbReference>
<dbReference type="Pfam" id="PF03947">
    <property type="entry name" value="Ribosomal_L2_C"/>
    <property type="match status" value="1"/>
</dbReference>
<dbReference type="PIRSF" id="PIRSF002158">
    <property type="entry name" value="Ribosomal_L2"/>
    <property type="match status" value="1"/>
</dbReference>
<dbReference type="SMART" id="SM01383">
    <property type="entry name" value="Ribosomal_L2"/>
    <property type="match status" value="1"/>
</dbReference>
<dbReference type="SMART" id="SM01382">
    <property type="entry name" value="Ribosomal_L2_C"/>
    <property type="match status" value="1"/>
</dbReference>
<dbReference type="SUPFAM" id="SSF50249">
    <property type="entry name" value="Nucleic acid-binding proteins"/>
    <property type="match status" value="1"/>
</dbReference>
<dbReference type="SUPFAM" id="SSF50104">
    <property type="entry name" value="Translation proteins SH3-like domain"/>
    <property type="match status" value="1"/>
</dbReference>
<dbReference type="PROSITE" id="PS00467">
    <property type="entry name" value="RIBOSOMAL_L2"/>
    <property type="match status" value="1"/>
</dbReference>
<gene>
    <name type="primary">rpl2-A</name>
</gene>
<gene>
    <name type="primary">rpl2-B</name>
</gene>
<reference key="1">
    <citation type="journal article" date="2006" name="Mol. Genet. Genomics">
        <title>The chloroplast genome of Nicotiana sylvestris and Nicotiana tomentosiformis: complete sequencing confirms that the Nicotiana sylvestris progenitor is the maternal genome donor of Nicotiana tabacum.</title>
        <authorList>
            <person name="Yukawa M."/>
            <person name="Tsudzuki T."/>
            <person name="Sugiura M."/>
        </authorList>
    </citation>
    <scope>NUCLEOTIDE SEQUENCE [LARGE SCALE GENOMIC DNA]</scope>
</reference>
<geneLocation type="chloroplast"/>
<protein>
    <recommendedName>
        <fullName evidence="2">Large ribosomal subunit protein uL2cz/uL2cy</fullName>
    </recommendedName>
    <alternativeName>
        <fullName evidence="4">50S ribosomal protein L2, chloroplastic</fullName>
    </alternativeName>
</protein>
<keyword id="KW-0150">Chloroplast</keyword>
<keyword id="KW-0934">Plastid</keyword>
<keyword id="KW-0687">Ribonucleoprotein</keyword>
<keyword id="KW-0689">Ribosomal protein</keyword>
<evidence type="ECO:0000250" key="1"/>
<evidence type="ECO:0000255" key="2">
    <source>
        <dbReference type="HAMAP-Rule" id="MF_01320"/>
    </source>
</evidence>
<evidence type="ECO:0000256" key="3">
    <source>
        <dbReference type="SAM" id="MobiDB-lite"/>
    </source>
</evidence>
<evidence type="ECO:0000305" key="4"/>